<proteinExistence type="inferred from homology"/>
<comment type="function">
    <text evidence="1">Involved in mRNA degradation. Catalyzes the phosphorolysis of single-stranded polyribonucleotides processively in the 3'- to 5'-direction.</text>
</comment>
<comment type="catalytic activity">
    <reaction evidence="1">
        <text>RNA(n+1) + phosphate = RNA(n) + a ribonucleoside 5'-diphosphate</text>
        <dbReference type="Rhea" id="RHEA:22096"/>
        <dbReference type="Rhea" id="RHEA-COMP:14527"/>
        <dbReference type="Rhea" id="RHEA-COMP:17342"/>
        <dbReference type="ChEBI" id="CHEBI:43474"/>
        <dbReference type="ChEBI" id="CHEBI:57930"/>
        <dbReference type="ChEBI" id="CHEBI:140395"/>
        <dbReference type="EC" id="2.7.7.8"/>
    </reaction>
</comment>
<comment type="cofactor">
    <cofactor evidence="1">
        <name>Mg(2+)</name>
        <dbReference type="ChEBI" id="CHEBI:18420"/>
    </cofactor>
</comment>
<comment type="subunit">
    <text evidence="1">Component of the RNA degradosome, which is a multiprotein complex involved in RNA processing and mRNA degradation.</text>
</comment>
<comment type="subcellular location">
    <subcellularLocation>
        <location evidence="1">Cytoplasm</location>
    </subcellularLocation>
</comment>
<comment type="similarity">
    <text evidence="1">Belongs to the polyribonucleotide nucleotidyltransferase family.</text>
</comment>
<dbReference type="EC" id="2.7.7.8" evidence="1"/>
<dbReference type="EMBL" id="CP000644">
    <property type="protein sequence ID" value="ABO89141.1"/>
    <property type="molecule type" value="Genomic_DNA"/>
</dbReference>
<dbReference type="RefSeq" id="WP_011898429.1">
    <property type="nucleotide sequence ID" value="NC_009348.1"/>
</dbReference>
<dbReference type="SMR" id="A4SJR9"/>
<dbReference type="STRING" id="29491.GCA_000820065_01169"/>
<dbReference type="KEGG" id="asa:ASA_1014"/>
<dbReference type="PATRIC" id="fig|382245.13.peg.1010"/>
<dbReference type="eggNOG" id="COG1185">
    <property type="taxonomic scope" value="Bacteria"/>
</dbReference>
<dbReference type="HOGENOM" id="CLU_004217_2_2_6"/>
<dbReference type="Proteomes" id="UP000000225">
    <property type="component" value="Chromosome"/>
</dbReference>
<dbReference type="GO" id="GO:0005829">
    <property type="term" value="C:cytosol"/>
    <property type="evidence" value="ECO:0007669"/>
    <property type="project" value="TreeGrafter"/>
</dbReference>
<dbReference type="GO" id="GO:0000175">
    <property type="term" value="F:3'-5'-RNA exonuclease activity"/>
    <property type="evidence" value="ECO:0007669"/>
    <property type="project" value="TreeGrafter"/>
</dbReference>
<dbReference type="GO" id="GO:0000287">
    <property type="term" value="F:magnesium ion binding"/>
    <property type="evidence" value="ECO:0007669"/>
    <property type="project" value="UniProtKB-UniRule"/>
</dbReference>
<dbReference type="GO" id="GO:0004654">
    <property type="term" value="F:polyribonucleotide nucleotidyltransferase activity"/>
    <property type="evidence" value="ECO:0007669"/>
    <property type="project" value="UniProtKB-UniRule"/>
</dbReference>
<dbReference type="GO" id="GO:0003723">
    <property type="term" value="F:RNA binding"/>
    <property type="evidence" value="ECO:0007669"/>
    <property type="project" value="UniProtKB-UniRule"/>
</dbReference>
<dbReference type="GO" id="GO:0006402">
    <property type="term" value="P:mRNA catabolic process"/>
    <property type="evidence" value="ECO:0007669"/>
    <property type="project" value="UniProtKB-UniRule"/>
</dbReference>
<dbReference type="GO" id="GO:0006396">
    <property type="term" value="P:RNA processing"/>
    <property type="evidence" value="ECO:0007669"/>
    <property type="project" value="InterPro"/>
</dbReference>
<dbReference type="CDD" id="cd02393">
    <property type="entry name" value="KH-I_PNPase"/>
    <property type="match status" value="1"/>
</dbReference>
<dbReference type="CDD" id="cd11363">
    <property type="entry name" value="RNase_PH_PNPase_1"/>
    <property type="match status" value="1"/>
</dbReference>
<dbReference type="CDD" id="cd11364">
    <property type="entry name" value="RNase_PH_PNPase_2"/>
    <property type="match status" value="1"/>
</dbReference>
<dbReference type="CDD" id="cd04472">
    <property type="entry name" value="S1_PNPase"/>
    <property type="match status" value="1"/>
</dbReference>
<dbReference type="FunFam" id="2.40.50.140:FF:000023">
    <property type="entry name" value="Polyribonucleotide nucleotidyltransferase"/>
    <property type="match status" value="1"/>
</dbReference>
<dbReference type="FunFam" id="3.30.1370.10:FF:000001">
    <property type="entry name" value="Polyribonucleotide nucleotidyltransferase"/>
    <property type="match status" value="1"/>
</dbReference>
<dbReference type="FunFam" id="3.30.230.70:FF:000001">
    <property type="entry name" value="Polyribonucleotide nucleotidyltransferase"/>
    <property type="match status" value="1"/>
</dbReference>
<dbReference type="FunFam" id="3.30.230.70:FF:000002">
    <property type="entry name" value="Polyribonucleotide nucleotidyltransferase"/>
    <property type="match status" value="1"/>
</dbReference>
<dbReference type="Gene3D" id="3.30.230.70">
    <property type="entry name" value="GHMP Kinase, N-terminal domain"/>
    <property type="match status" value="2"/>
</dbReference>
<dbReference type="Gene3D" id="3.30.1370.10">
    <property type="entry name" value="K Homology domain, type 1"/>
    <property type="match status" value="1"/>
</dbReference>
<dbReference type="Gene3D" id="2.40.50.140">
    <property type="entry name" value="Nucleic acid-binding proteins"/>
    <property type="match status" value="1"/>
</dbReference>
<dbReference type="HAMAP" id="MF_01595">
    <property type="entry name" value="PNPase"/>
    <property type="match status" value="1"/>
</dbReference>
<dbReference type="InterPro" id="IPR001247">
    <property type="entry name" value="ExoRNase_PH_dom1"/>
</dbReference>
<dbReference type="InterPro" id="IPR015847">
    <property type="entry name" value="ExoRNase_PH_dom2"/>
</dbReference>
<dbReference type="InterPro" id="IPR036345">
    <property type="entry name" value="ExoRNase_PH_dom2_sf"/>
</dbReference>
<dbReference type="InterPro" id="IPR004087">
    <property type="entry name" value="KH_dom"/>
</dbReference>
<dbReference type="InterPro" id="IPR004088">
    <property type="entry name" value="KH_dom_type_1"/>
</dbReference>
<dbReference type="InterPro" id="IPR036612">
    <property type="entry name" value="KH_dom_type_1_sf"/>
</dbReference>
<dbReference type="InterPro" id="IPR012340">
    <property type="entry name" value="NA-bd_OB-fold"/>
</dbReference>
<dbReference type="InterPro" id="IPR012162">
    <property type="entry name" value="PNPase"/>
</dbReference>
<dbReference type="InterPro" id="IPR027408">
    <property type="entry name" value="PNPase/RNase_PH_dom_sf"/>
</dbReference>
<dbReference type="InterPro" id="IPR015848">
    <property type="entry name" value="PNPase_PH_RNA-bd_bac/org-type"/>
</dbReference>
<dbReference type="InterPro" id="IPR036456">
    <property type="entry name" value="PNPase_PH_RNA-bd_sf"/>
</dbReference>
<dbReference type="InterPro" id="IPR020568">
    <property type="entry name" value="Ribosomal_Su5_D2-typ_SF"/>
</dbReference>
<dbReference type="InterPro" id="IPR003029">
    <property type="entry name" value="S1_domain"/>
</dbReference>
<dbReference type="NCBIfam" id="TIGR03591">
    <property type="entry name" value="polynuc_phos"/>
    <property type="match status" value="1"/>
</dbReference>
<dbReference type="NCBIfam" id="NF008805">
    <property type="entry name" value="PRK11824.1"/>
    <property type="match status" value="1"/>
</dbReference>
<dbReference type="PANTHER" id="PTHR11252">
    <property type="entry name" value="POLYRIBONUCLEOTIDE NUCLEOTIDYLTRANSFERASE"/>
    <property type="match status" value="1"/>
</dbReference>
<dbReference type="PANTHER" id="PTHR11252:SF0">
    <property type="entry name" value="POLYRIBONUCLEOTIDE NUCLEOTIDYLTRANSFERASE 1, MITOCHONDRIAL"/>
    <property type="match status" value="1"/>
</dbReference>
<dbReference type="Pfam" id="PF00013">
    <property type="entry name" value="KH_1"/>
    <property type="match status" value="1"/>
</dbReference>
<dbReference type="Pfam" id="PF03726">
    <property type="entry name" value="PNPase"/>
    <property type="match status" value="1"/>
</dbReference>
<dbReference type="Pfam" id="PF01138">
    <property type="entry name" value="RNase_PH"/>
    <property type="match status" value="2"/>
</dbReference>
<dbReference type="Pfam" id="PF03725">
    <property type="entry name" value="RNase_PH_C"/>
    <property type="match status" value="2"/>
</dbReference>
<dbReference type="Pfam" id="PF00575">
    <property type="entry name" value="S1"/>
    <property type="match status" value="1"/>
</dbReference>
<dbReference type="PIRSF" id="PIRSF005499">
    <property type="entry name" value="PNPase"/>
    <property type="match status" value="1"/>
</dbReference>
<dbReference type="SMART" id="SM00322">
    <property type="entry name" value="KH"/>
    <property type="match status" value="1"/>
</dbReference>
<dbReference type="SMART" id="SM00316">
    <property type="entry name" value="S1"/>
    <property type="match status" value="1"/>
</dbReference>
<dbReference type="SUPFAM" id="SSF54791">
    <property type="entry name" value="Eukaryotic type KH-domain (KH-domain type I)"/>
    <property type="match status" value="1"/>
</dbReference>
<dbReference type="SUPFAM" id="SSF50249">
    <property type="entry name" value="Nucleic acid-binding proteins"/>
    <property type="match status" value="1"/>
</dbReference>
<dbReference type="SUPFAM" id="SSF46915">
    <property type="entry name" value="Polynucleotide phosphorylase/guanosine pentaphosphate synthase (PNPase/GPSI), domain 3"/>
    <property type="match status" value="1"/>
</dbReference>
<dbReference type="SUPFAM" id="SSF55666">
    <property type="entry name" value="Ribonuclease PH domain 2-like"/>
    <property type="match status" value="2"/>
</dbReference>
<dbReference type="SUPFAM" id="SSF54211">
    <property type="entry name" value="Ribosomal protein S5 domain 2-like"/>
    <property type="match status" value="2"/>
</dbReference>
<dbReference type="PROSITE" id="PS50084">
    <property type="entry name" value="KH_TYPE_1"/>
    <property type="match status" value="1"/>
</dbReference>
<dbReference type="PROSITE" id="PS50126">
    <property type="entry name" value="S1"/>
    <property type="match status" value="1"/>
</dbReference>
<keyword id="KW-0963">Cytoplasm</keyword>
<keyword id="KW-0460">Magnesium</keyword>
<keyword id="KW-0479">Metal-binding</keyword>
<keyword id="KW-0548">Nucleotidyltransferase</keyword>
<keyword id="KW-0694">RNA-binding</keyword>
<keyword id="KW-0808">Transferase</keyword>
<feature type="chain" id="PRO_0000329487" description="Polyribonucleotide nucleotidyltransferase">
    <location>
        <begin position="1"/>
        <end position="713"/>
    </location>
</feature>
<feature type="domain" description="KH" evidence="1">
    <location>
        <begin position="552"/>
        <end position="611"/>
    </location>
</feature>
<feature type="domain" description="S1 motif" evidence="1">
    <location>
        <begin position="621"/>
        <end position="689"/>
    </location>
</feature>
<feature type="binding site" evidence="1">
    <location>
        <position position="485"/>
    </location>
    <ligand>
        <name>Mg(2+)</name>
        <dbReference type="ChEBI" id="CHEBI:18420"/>
    </ligand>
</feature>
<feature type="binding site" evidence="1">
    <location>
        <position position="491"/>
    </location>
    <ligand>
        <name>Mg(2+)</name>
        <dbReference type="ChEBI" id="CHEBI:18420"/>
    </ligand>
</feature>
<accession>A4SJR9</accession>
<sequence>MNPIVKSFQYGQHTVTLETGVMARQATAAVMVSMDDTCVFVTVVGKKEADHGRDFFPLTVNYQERTYAAGRIPGGFFRREGRPSEGETLTSRLIDRPIRPLFPEGFLNEVQVVATVMSVNPLVSPDIVAMIGASAALAISGIPFGGPIAAARVGYMNGQYVLNPTTAELPQSDLDLVVAGTANAVLMVESEAAILSEEVMLGAVVYGHEQMQVVINAINEFAADVGTQPWDWTPPATNEALKAKIAELATAELGEAYRITEKAVRYAAIGAIKQRVIEQVIAAGVEDDAKKIGEEFHSLESRIVRGRVVRGEPRIDGRDPEMIRALSVGTGILPRAHGSALFTRGETQAIVVATLGTERDAQNIDELAGHRADRFMLHYNFPPYCVGETGMMGSPKRREIGHGRLAKRGVAAVMPSAAEFPYVVRVVSEITESNGSSSMASVCGSSLALMDAGVPIKASVAGIAMGLVKEEEGFVVLSDILGDEDHLGDMDFKVAGTTQGITALQMDIKIEGITKEIMEIALKQARGARLHILKVMDEAIQAPRAEISDFAPRIHTIKINPEKIKDVIGKGGSVIRALTEETGTNIELDDDGTVRISAVANEAAMEAIRRIEAITAEIEVNRIYEGKVVRLADFGAFVNILPGKDGLVHISQITDARVQNVADFLKLGDVVKVKVLEVDRQGRVRLSIKEANAPTEAVAPAADVAAVEEPAAE</sequence>
<reference key="1">
    <citation type="journal article" date="2008" name="BMC Genomics">
        <title>The genome of Aeromonas salmonicida subsp. salmonicida A449: insights into the evolution of a fish pathogen.</title>
        <authorList>
            <person name="Reith M.E."/>
            <person name="Singh R.K."/>
            <person name="Curtis B."/>
            <person name="Boyd J.M."/>
            <person name="Bouevitch A."/>
            <person name="Kimball J."/>
            <person name="Munholland J."/>
            <person name="Murphy C."/>
            <person name="Sarty D."/>
            <person name="Williams J."/>
            <person name="Nash J.H."/>
            <person name="Johnson S.C."/>
            <person name="Brown L.L."/>
        </authorList>
    </citation>
    <scope>NUCLEOTIDE SEQUENCE [LARGE SCALE GENOMIC DNA]</scope>
    <source>
        <strain>A449</strain>
    </source>
</reference>
<evidence type="ECO:0000255" key="1">
    <source>
        <dbReference type="HAMAP-Rule" id="MF_01595"/>
    </source>
</evidence>
<organism>
    <name type="scientific">Aeromonas salmonicida (strain A449)</name>
    <dbReference type="NCBI Taxonomy" id="382245"/>
    <lineage>
        <taxon>Bacteria</taxon>
        <taxon>Pseudomonadati</taxon>
        <taxon>Pseudomonadota</taxon>
        <taxon>Gammaproteobacteria</taxon>
        <taxon>Aeromonadales</taxon>
        <taxon>Aeromonadaceae</taxon>
        <taxon>Aeromonas</taxon>
    </lineage>
</organism>
<protein>
    <recommendedName>
        <fullName evidence="1">Polyribonucleotide nucleotidyltransferase</fullName>
        <ecNumber evidence="1">2.7.7.8</ecNumber>
    </recommendedName>
    <alternativeName>
        <fullName evidence="1">Polynucleotide phosphorylase</fullName>
        <shortName evidence="1">PNPase</shortName>
    </alternativeName>
</protein>
<gene>
    <name evidence="1" type="primary">pnp</name>
    <name type="ordered locus">ASA_1014</name>
</gene>
<name>PNP_AERS4</name>